<feature type="signal peptide" evidence="2">
    <location>
        <begin position="1"/>
        <end position="22"/>
    </location>
</feature>
<feature type="chain" id="PRO_5000066304" description="Chitin disaccharide deacetylase">
    <location>
        <begin position="23"/>
        <end position="427"/>
    </location>
</feature>
<feature type="domain" description="NodB homology" evidence="1">
    <location>
        <begin position="28"/>
        <end position="326"/>
    </location>
</feature>
<feature type="domain" description="Chitin-binding type-3 1">
    <location>
        <begin position="333"/>
        <end position="375"/>
    </location>
</feature>
<feature type="domain" description="Chitin-binding type-3 2">
    <location>
        <begin position="382"/>
        <end position="419"/>
    </location>
</feature>
<evidence type="ECO:0000255" key="1">
    <source>
        <dbReference type="PROSITE-ProRule" id="PRU01014"/>
    </source>
</evidence>
<evidence type="ECO:0000269" key="2">
    <source>
    </source>
</evidence>
<evidence type="ECO:0000305" key="3"/>
<dbReference type="EC" id="3.5.1.105" evidence="2"/>
<dbReference type="EMBL" id="AB055217">
    <property type="protein sequence ID" value="BAB21759.1"/>
    <property type="molecule type" value="Genomic_DNA"/>
</dbReference>
<dbReference type="EMBL" id="AJ292005">
    <property type="protein sequence ID" value="CAC29092.1"/>
    <property type="molecule type" value="Genomic_DNA"/>
</dbReference>
<dbReference type="SMR" id="Q99PX1"/>
<dbReference type="STRING" id="663.BAU10_12895"/>
<dbReference type="CAZy" id="CBM12">
    <property type="family name" value="Carbohydrate-Binding Module Family 12"/>
</dbReference>
<dbReference type="eggNOG" id="COG0726">
    <property type="taxonomic scope" value="Bacteria"/>
</dbReference>
<dbReference type="BioCyc" id="MetaCyc:MONOMER-15495"/>
<dbReference type="BRENDA" id="3.5.1.105">
    <property type="organism ID" value="6624"/>
</dbReference>
<dbReference type="UniPathway" id="UPA00349"/>
<dbReference type="GO" id="GO:0005576">
    <property type="term" value="C:extracellular region"/>
    <property type="evidence" value="ECO:0007669"/>
    <property type="project" value="InterPro"/>
</dbReference>
<dbReference type="GO" id="GO:0030246">
    <property type="term" value="F:carbohydrate binding"/>
    <property type="evidence" value="ECO:0007669"/>
    <property type="project" value="InterPro"/>
</dbReference>
<dbReference type="GO" id="GO:0004099">
    <property type="term" value="F:chitin deacetylase activity"/>
    <property type="evidence" value="ECO:0000314"/>
    <property type="project" value="UniProtKB"/>
</dbReference>
<dbReference type="GO" id="GO:0036311">
    <property type="term" value="F:chitin disaccharide deacetylase activity"/>
    <property type="evidence" value="ECO:0007669"/>
    <property type="project" value="UniProtKB-EC"/>
</dbReference>
<dbReference type="GO" id="GO:0004553">
    <property type="term" value="F:hydrolase activity, hydrolyzing O-glycosyl compounds"/>
    <property type="evidence" value="ECO:0007669"/>
    <property type="project" value="InterPro"/>
</dbReference>
<dbReference type="GO" id="GO:0006032">
    <property type="term" value="P:chitin catabolic process"/>
    <property type="evidence" value="ECO:0000314"/>
    <property type="project" value="UniProtKB"/>
</dbReference>
<dbReference type="GO" id="GO:0000272">
    <property type="term" value="P:polysaccharide catabolic process"/>
    <property type="evidence" value="ECO:0007669"/>
    <property type="project" value="UniProtKB-KW"/>
</dbReference>
<dbReference type="CDD" id="cd12214">
    <property type="entry name" value="ChiA1_BD"/>
    <property type="match status" value="2"/>
</dbReference>
<dbReference type="FunFam" id="3.20.20.370:FF:000016">
    <property type="entry name" value="Chitin oligosaccharide deacetylase"/>
    <property type="match status" value="1"/>
</dbReference>
<dbReference type="Gene3D" id="2.10.10.90">
    <property type="match status" value="1"/>
</dbReference>
<dbReference type="Gene3D" id="3.20.20.370">
    <property type="entry name" value="Glycoside hydrolase/deacetylase"/>
    <property type="match status" value="1"/>
</dbReference>
<dbReference type="InterPro" id="IPR003610">
    <property type="entry name" value="CBM5/12"/>
</dbReference>
<dbReference type="InterPro" id="IPR036573">
    <property type="entry name" value="CBM_sf_5/12"/>
</dbReference>
<dbReference type="InterPro" id="IPR011330">
    <property type="entry name" value="Glyco_hydro/deAcase_b/a-brl"/>
</dbReference>
<dbReference type="InterPro" id="IPR002509">
    <property type="entry name" value="NODB_dom"/>
</dbReference>
<dbReference type="InterPro" id="IPR050248">
    <property type="entry name" value="Polysacc_deacetylase_ArnD"/>
</dbReference>
<dbReference type="PANTHER" id="PTHR10587">
    <property type="entry name" value="GLYCOSYL TRANSFERASE-RELATED"/>
    <property type="match status" value="1"/>
</dbReference>
<dbReference type="PANTHER" id="PTHR10587:SF125">
    <property type="entry name" value="POLYSACCHARIDE DEACETYLASE YHEN-RELATED"/>
    <property type="match status" value="1"/>
</dbReference>
<dbReference type="Pfam" id="PF02839">
    <property type="entry name" value="CBM_5_12"/>
    <property type="match status" value="2"/>
</dbReference>
<dbReference type="Pfam" id="PF01522">
    <property type="entry name" value="Polysacc_deac_1"/>
    <property type="match status" value="1"/>
</dbReference>
<dbReference type="SMART" id="SM00495">
    <property type="entry name" value="ChtBD3"/>
    <property type="match status" value="2"/>
</dbReference>
<dbReference type="SUPFAM" id="SSF51055">
    <property type="entry name" value="Carbohydrate binding domain"/>
    <property type="match status" value="2"/>
</dbReference>
<dbReference type="SUPFAM" id="SSF88713">
    <property type="entry name" value="Glycoside hydrolase/deacetylase"/>
    <property type="match status" value="1"/>
</dbReference>
<dbReference type="PROSITE" id="PS51677">
    <property type="entry name" value="NODB"/>
    <property type="match status" value="1"/>
</dbReference>
<proteinExistence type="evidence at protein level"/>
<organism>
    <name type="scientific">Vibrio alginolyticus</name>
    <dbReference type="NCBI Taxonomy" id="663"/>
    <lineage>
        <taxon>Bacteria</taxon>
        <taxon>Pseudomonadati</taxon>
        <taxon>Pseudomonadota</taxon>
        <taxon>Gammaproteobacteria</taxon>
        <taxon>Vibrionales</taxon>
        <taxon>Vibrionaceae</taxon>
        <taxon>Vibrio</taxon>
    </lineage>
</organism>
<name>DEAA_VIBAL</name>
<protein>
    <recommendedName>
        <fullName>Chitin disaccharide deacetylase</fullName>
        <ecNumber evidence="2">3.5.1.105</ecNumber>
    </recommendedName>
    <alternativeName>
        <fullName>Chitin oligosaccharide deacetylase</fullName>
    </alternativeName>
</protein>
<reference key="1">
    <citation type="journal article" date="2000" name="J. Biosci. Bioeng.">
        <title>Cloning and sequencing of the deacetylase gene from Vibrio alginolyticus H-8.</title>
        <authorList>
            <person name="Ohishi K."/>
            <person name="Murase K."/>
            <person name="Ohta T."/>
            <person name="Etoh H."/>
        </authorList>
    </citation>
    <scope>NUCLEOTIDE SEQUENCE [GENOMIC DNA]</scope>
    <scope>PROTEIN SEQUENCE OF N-TERMINUS</scope>
    <scope>FUNCTION</scope>
    <scope>CATALYTIC ACTIVITY</scope>
    <source>
        <strain>H-8</strain>
    </source>
</reference>
<keyword id="KW-0119">Carbohydrate metabolism</keyword>
<keyword id="KW-0146">Chitin degradation</keyword>
<keyword id="KW-0903">Direct protein sequencing</keyword>
<keyword id="KW-0378">Hydrolase</keyword>
<keyword id="KW-0624">Polysaccharide degradation</keyword>
<keyword id="KW-0677">Repeat</keyword>
<keyword id="KW-0732">Signal</keyword>
<sequence length="427" mass="47050">MKLNKLAIATLVSAALSQYAFAQTDTKGTIYLTFDDGPINASIDVINVLNQEEVKATFYFNAWHLDGIGDENEDRALEALKLALDSGHIVANHSYDHMVHNCVEEFGPNSAAECNATGDHQINSYQDPAYDASMFAENLSVLEKYLPNITSYPNYKANEFARLPYTNGWRVTKDFKADGLCATSDDLKPWEPGYSCDTANPSNSVKAAIAVQNILANNGYQTHGWDVDWAPENWGIAMPANSLTEAEPFLGYVDSALNTCAPTTINPINSKAQEFPCGTPLHADKVIVLTHEFLFEDGKRGMGATQNLPKLAKFIQLAKQAGYVFDTMDNYTPNWQVGNNYSAGDYVLHLGTVYQAVTSHTAQQDWAPSPTSSLWTNADPATNWTQNVSYKQGDVVTYQGLRYLVNVPHVSQADWTPNSQNTLFTAL</sequence>
<comment type="function">
    <text evidence="2">Specifically catalyzes the degradation of N,N'-diacetylchitobiose. Key enzyme in the chitin catabolic cascade.</text>
</comment>
<comment type="catalytic activity">
    <reaction evidence="2">
        <text>N,N'-diacetylchitobiose + H2O = N-acetyl-beta-D-glucosaminyl-(1-&gt;4)-D-glucosamine + acetate</text>
        <dbReference type="Rhea" id="RHEA:27469"/>
        <dbReference type="ChEBI" id="CHEBI:15377"/>
        <dbReference type="ChEBI" id="CHEBI:28681"/>
        <dbReference type="ChEBI" id="CHEBI:30089"/>
        <dbReference type="ChEBI" id="CHEBI:59910"/>
        <dbReference type="EC" id="3.5.1.105"/>
    </reaction>
</comment>
<comment type="pathway">
    <text>Glycan degradation; chitin degradation.</text>
</comment>
<comment type="similarity">
    <text evidence="3">Belongs to the polysaccharide deacetylase family. Carbohydrate-binding module 12 subfamily.</text>
</comment>
<gene>
    <name type="primary">deaA</name>
</gene>
<accession>Q99PX1</accession>